<protein>
    <recommendedName>
        <fullName>Transcriptional regulatory protein XylR</fullName>
    </recommendedName>
    <alternativeName>
        <fullName>67 kDa protein</fullName>
    </alternativeName>
</protein>
<organism>
    <name type="scientific">Pseudomonas putida</name>
    <name type="common">Arthrobacter siderocapsulatus</name>
    <dbReference type="NCBI Taxonomy" id="303"/>
    <lineage>
        <taxon>Bacteria</taxon>
        <taxon>Pseudomonadati</taxon>
        <taxon>Pseudomonadota</taxon>
        <taxon>Gammaproteobacteria</taxon>
        <taxon>Pseudomonadales</taxon>
        <taxon>Pseudomonadaceae</taxon>
        <taxon>Pseudomonas</taxon>
    </lineage>
</organism>
<gene>
    <name type="primary">xylR</name>
</gene>
<reference key="1">
    <citation type="journal article" date="1988" name="Gene">
        <title>Nucleotide sequence of the regulatory gene xylR of the TOL plasmid from Pseudomonas putida.</title>
        <authorList>
            <person name="Inouye S."/>
            <person name="Nakazawa A."/>
            <person name="Nakazawa T."/>
        </authorList>
    </citation>
    <scope>NUCLEOTIDE SEQUENCE [GENOMIC DNA]</scope>
</reference>
<reference key="2">
    <citation type="journal article" date="1985" name="J. Bacteriol.">
        <title>Determination of the transcription initiation site and identification of the protein product of the regulatory gene xylR for xyl operons on the TOL plasmid.</title>
        <authorList>
            <person name="Inouye S."/>
            <person name="Nakazawa A."/>
            <person name="Nakazawa T."/>
        </authorList>
    </citation>
    <scope>NUCLEOTIDE SEQUENCE [GENOMIC DNA] OF 1-25</scope>
</reference>
<reference key="3">
    <citation type="journal article" date="1986" name="J. Gen. Microbiol.">
        <title>Genetic, functional and sequence analysis of the xylR and xylS regulatory genes of the TOL plasmid pWW0.</title>
        <authorList>
            <person name="Spooner R.A."/>
            <person name="Lindsay K."/>
            <person name="Franklin F.C.H."/>
        </authorList>
    </citation>
    <scope>NUCLEOTIDE SEQUENCE [GENOMIC DNA] OF 1-66</scope>
    <source>
        <strain>ATCC 33015 / DSM 3931 / JCM 6156 / NCIMB 12182 / mt-2</strain>
    </source>
</reference>
<feature type="chain" id="PRO_0000081344" description="Transcriptional regulatory protein XylR">
    <location>
        <begin position="1"/>
        <end position="566"/>
    </location>
</feature>
<feature type="domain" description="Sigma-54 factor interaction" evidence="2">
    <location>
        <begin position="235"/>
        <end position="464"/>
    </location>
</feature>
<feature type="DNA-binding region" description="H-T-H motif" evidence="1">
    <location>
        <begin position="534"/>
        <end position="553"/>
    </location>
</feature>
<feature type="binding site" evidence="2">
    <location>
        <begin position="263"/>
        <end position="270"/>
    </location>
    <ligand>
        <name>ATP</name>
        <dbReference type="ChEBI" id="CHEBI:30616"/>
    </ligand>
</feature>
<feature type="binding site" evidence="2">
    <location>
        <begin position="326"/>
        <end position="335"/>
    </location>
    <ligand>
        <name>ATP</name>
        <dbReference type="ChEBI" id="CHEBI:30616"/>
    </ligand>
</feature>
<keyword id="KW-0010">Activator</keyword>
<keyword id="KW-0058">Aromatic hydrocarbons catabolism</keyword>
<keyword id="KW-0067">ATP-binding</keyword>
<keyword id="KW-0238">DNA-binding</keyword>
<keyword id="KW-0547">Nucleotide-binding</keyword>
<keyword id="KW-0614">Plasmid</keyword>
<keyword id="KW-0804">Transcription</keyword>
<keyword id="KW-0805">Transcription regulation</keyword>
<keyword id="KW-0902">Two-component regulatory system</keyword>
<geneLocation type="plasmid">
    <name>TOL pWW0</name>
</geneLocation>
<accession>P06519</accession>
<sequence length="566" mass="63744">MSLTYKPKMQHEDMQDLSSQIRFVAAEGKIWLGEQRMLVMQLSTLASFRREIISLIGVERAKGFFLRLGYQSGLMDAELARKLRPAMREEEVFLAGPQLYALKGMVKVRLLTMDIAIRDGRFNVEAEWIDSFEVDICRTELGLMNEPVCWTVLGYASGYGSAFMGRRIIFQETSCRGCGDDKCLIVGKTAEEWGDVSSFEAYFKSDPIVDERYELQTQVANLRNRLKQYDGQYYGIGHSPAYKRICETIDKAARGRVSVLLLGETGVGKEVIARSVHLRSERAEQPFVAVNCAAIPPDLIESELFGVDKGAYTGAVNARAGRFERANGGTIFLDEVIELTPRAQATLLRVLQEGELERVGGDRTRKVDVRLITATNENLEEAVKMGRFRADLFFRLNVFPVHIPPLRERVEDIPLLVEHFLRRHHKEYGKKTLGLSDRAMEACLHYQWPGNIRELENALERGVILTESNESINVESLFPGLATATEGDRLSSEGRLEEESGDSWFRQIIDQGVSLEDLEAGLMRTAMDRCGQNISQAARLLGLTRPAMAYRLKKLDPSLSVKAMGR</sequence>
<comment type="function">
    <text>Regulatory protein of the TOL plasmid xyl operons. In the presence of m-xylene or m-methylbenzyl alcohol XylR activates both the xylCMABN operon and the regulatory gene xylS; xylS itself activates the xylXYZLTEGFJQKIH operon. XylR interacts with sigma-54.</text>
</comment>
<dbReference type="EMBL" id="M10143">
    <property type="protein sequence ID" value="AAB59162.1"/>
    <property type="molecule type" value="Genomic_DNA"/>
</dbReference>
<dbReference type="EMBL" id="M15740">
    <property type="protein sequence ID" value="AAA26028.2"/>
    <property type="status" value="ALT_SEQ"/>
    <property type="molecule type" value="Genomic_DNA"/>
</dbReference>
<dbReference type="PIR" id="A26084">
    <property type="entry name" value="A26084"/>
</dbReference>
<dbReference type="PIR" id="B24987">
    <property type="entry name" value="B24987"/>
</dbReference>
<dbReference type="PIR" id="JT0327">
    <property type="entry name" value="NIPSRP"/>
</dbReference>
<dbReference type="RefSeq" id="NP_542857.1">
    <property type="nucleotide sequence ID" value="NC_003350.1"/>
</dbReference>
<dbReference type="RefSeq" id="WP_011005900.1">
    <property type="nucleotide sequence ID" value="NC_003350.1"/>
</dbReference>
<dbReference type="SMR" id="P06519"/>
<dbReference type="GO" id="GO:0005524">
    <property type="term" value="F:ATP binding"/>
    <property type="evidence" value="ECO:0007669"/>
    <property type="project" value="UniProtKB-KW"/>
</dbReference>
<dbReference type="GO" id="GO:0016887">
    <property type="term" value="F:ATP hydrolysis activity"/>
    <property type="evidence" value="ECO:0007669"/>
    <property type="project" value="InterPro"/>
</dbReference>
<dbReference type="GO" id="GO:0043565">
    <property type="term" value="F:sequence-specific DNA binding"/>
    <property type="evidence" value="ECO:0007669"/>
    <property type="project" value="InterPro"/>
</dbReference>
<dbReference type="GO" id="GO:0009056">
    <property type="term" value="P:catabolic process"/>
    <property type="evidence" value="ECO:0007669"/>
    <property type="project" value="UniProtKB-KW"/>
</dbReference>
<dbReference type="GO" id="GO:0000160">
    <property type="term" value="P:phosphorelay signal transduction system"/>
    <property type="evidence" value="ECO:0007669"/>
    <property type="project" value="UniProtKB-KW"/>
</dbReference>
<dbReference type="GO" id="GO:0006355">
    <property type="term" value="P:regulation of DNA-templated transcription"/>
    <property type="evidence" value="ECO:0007669"/>
    <property type="project" value="InterPro"/>
</dbReference>
<dbReference type="CDD" id="cd00009">
    <property type="entry name" value="AAA"/>
    <property type="match status" value="1"/>
</dbReference>
<dbReference type="FunFam" id="3.40.50.300:FF:000006">
    <property type="entry name" value="DNA-binding transcriptional regulator NtrC"/>
    <property type="match status" value="1"/>
</dbReference>
<dbReference type="Gene3D" id="1.10.8.60">
    <property type="match status" value="1"/>
</dbReference>
<dbReference type="Gene3D" id="1.10.10.60">
    <property type="entry name" value="Homeodomain-like"/>
    <property type="match status" value="1"/>
</dbReference>
<dbReference type="Gene3D" id="3.40.50.300">
    <property type="entry name" value="P-loop containing nucleotide triphosphate hydrolases"/>
    <property type="match status" value="1"/>
</dbReference>
<dbReference type="Gene3D" id="3.30.1380.20">
    <property type="entry name" value="Trafficking protein particle complex subunit 3"/>
    <property type="match status" value="1"/>
</dbReference>
<dbReference type="InterPro" id="IPR003593">
    <property type="entry name" value="AAA+_ATPase"/>
</dbReference>
<dbReference type="InterPro" id="IPR009057">
    <property type="entry name" value="Homeodomain-like_sf"/>
</dbReference>
<dbReference type="InterPro" id="IPR002197">
    <property type="entry name" value="HTH_Fis"/>
</dbReference>
<dbReference type="InterPro" id="IPR024096">
    <property type="entry name" value="NO_sig/Golgi_transp_ligand-bd"/>
</dbReference>
<dbReference type="InterPro" id="IPR027417">
    <property type="entry name" value="P-loop_NTPase"/>
</dbReference>
<dbReference type="InterPro" id="IPR002078">
    <property type="entry name" value="Sigma_54_int"/>
</dbReference>
<dbReference type="InterPro" id="IPR025662">
    <property type="entry name" value="Sigma_54_int_dom_ATP-bd_1"/>
</dbReference>
<dbReference type="InterPro" id="IPR025943">
    <property type="entry name" value="Sigma_54_int_dom_ATP-bd_2"/>
</dbReference>
<dbReference type="InterPro" id="IPR025944">
    <property type="entry name" value="Sigma_54_int_dom_CS"/>
</dbReference>
<dbReference type="InterPro" id="IPR004096">
    <property type="entry name" value="V4R"/>
</dbReference>
<dbReference type="InterPro" id="IPR010523">
    <property type="entry name" value="XylR_N"/>
</dbReference>
<dbReference type="PANTHER" id="PTHR32071:SF117">
    <property type="entry name" value="PTS-DEPENDENT DIHYDROXYACETONE KINASE OPERON REGULATORY PROTEIN-RELATED"/>
    <property type="match status" value="1"/>
</dbReference>
<dbReference type="PANTHER" id="PTHR32071">
    <property type="entry name" value="TRANSCRIPTIONAL REGULATORY PROTEIN"/>
    <property type="match status" value="1"/>
</dbReference>
<dbReference type="Pfam" id="PF02954">
    <property type="entry name" value="HTH_8"/>
    <property type="match status" value="1"/>
</dbReference>
<dbReference type="Pfam" id="PF00158">
    <property type="entry name" value="Sigma54_activat"/>
    <property type="match status" value="1"/>
</dbReference>
<dbReference type="Pfam" id="PF02830">
    <property type="entry name" value="V4R"/>
    <property type="match status" value="1"/>
</dbReference>
<dbReference type="Pfam" id="PF06505">
    <property type="entry name" value="XylR_N"/>
    <property type="match status" value="1"/>
</dbReference>
<dbReference type="PRINTS" id="PR01590">
    <property type="entry name" value="HTHFIS"/>
</dbReference>
<dbReference type="SMART" id="SM00382">
    <property type="entry name" value="AAA"/>
    <property type="match status" value="1"/>
</dbReference>
<dbReference type="SMART" id="SM00989">
    <property type="entry name" value="V4R"/>
    <property type="match status" value="1"/>
</dbReference>
<dbReference type="SUPFAM" id="SSF46689">
    <property type="entry name" value="Homeodomain-like"/>
    <property type="match status" value="1"/>
</dbReference>
<dbReference type="SUPFAM" id="SSF111126">
    <property type="entry name" value="Ligand-binding domain in the NO signalling and Golgi transport"/>
    <property type="match status" value="1"/>
</dbReference>
<dbReference type="SUPFAM" id="SSF52540">
    <property type="entry name" value="P-loop containing nucleoside triphosphate hydrolases"/>
    <property type="match status" value="1"/>
</dbReference>
<dbReference type="PROSITE" id="PS00675">
    <property type="entry name" value="SIGMA54_INTERACT_1"/>
    <property type="match status" value="1"/>
</dbReference>
<dbReference type="PROSITE" id="PS00676">
    <property type="entry name" value="SIGMA54_INTERACT_2"/>
    <property type="match status" value="1"/>
</dbReference>
<dbReference type="PROSITE" id="PS00688">
    <property type="entry name" value="SIGMA54_INTERACT_3"/>
    <property type="match status" value="1"/>
</dbReference>
<dbReference type="PROSITE" id="PS50045">
    <property type="entry name" value="SIGMA54_INTERACT_4"/>
    <property type="match status" value="1"/>
</dbReference>
<proteinExistence type="predicted"/>
<evidence type="ECO:0000255" key="1"/>
<evidence type="ECO:0000255" key="2">
    <source>
        <dbReference type="PROSITE-ProRule" id="PRU00193"/>
    </source>
</evidence>
<name>XYLR_PSEPU</name>